<sequence length="541" mass="61912">MAAASFQPLKCLLLWVFFVITPPVKAVPEPGIWTVPIGSGAGSLFFRKTLYNSTNIKVKLISPNCPTPVKLTVKWYLRSHRCYNQFTNLEEVLERHHTNLDTTDNFCKNVSKPDFCDKNEDKNIDCNKDMHALPTLKMSKLVPKISVNQSAGSKNPLNQMDFDIVARTYQDGPYLFVLQVKGDENVKWNLSVTVSMKGPHGFISASDWPLMIFYMVMCIMYILLALLWFIWSACYWKDLLRIQFWIAAVIFLGMLEKAVYYAEYQNTDNTGVSSHGLLIFAELISSIKRTLARLLVTIVSLGYGIIKPRLGAVMHRVVGMGVLYFVFAAVEGVMRIIGAKEYDLVLLAGIPLALLDSGLCWWIFVSLAQTMKTLKLRKNTVKYSLYRHFTNTLIFAILASIIFMIWRTKKFQLVDCQADWMELWVDDAYWRFLFFIILLVIMFLWRPSANNQRYAFTPLIDDSDDEVEEFLVTDHLAEGMKLRGTKPECNGAPKPPATNIDEDLKWVEENIPSSFADAALPVLMDSDEEIMMTKYEMSKIE</sequence>
<gene>
    <name evidence="1" type="primary">tmem87a</name>
    <name evidence="4" type="ORF">TGas047b06.1</name>
</gene>
<name>TM87A_XENTR</name>
<organism>
    <name type="scientific">Xenopus tropicalis</name>
    <name type="common">Western clawed frog</name>
    <name type="synonym">Silurana tropicalis</name>
    <dbReference type="NCBI Taxonomy" id="8364"/>
    <lineage>
        <taxon>Eukaryota</taxon>
        <taxon>Metazoa</taxon>
        <taxon>Chordata</taxon>
        <taxon>Craniata</taxon>
        <taxon>Vertebrata</taxon>
        <taxon>Euteleostomi</taxon>
        <taxon>Amphibia</taxon>
        <taxon>Batrachia</taxon>
        <taxon>Anura</taxon>
        <taxon>Pipoidea</taxon>
        <taxon>Pipidae</taxon>
        <taxon>Xenopodinae</taxon>
        <taxon>Xenopus</taxon>
        <taxon>Silurana</taxon>
    </lineage>
</organism>
<feature type="signal peptide" evidence="2">
    <location>
        <begin position="1"/>
        <end position="26"/>
    </location>
</feature>
<feature type="chain" id="PRO_0000270753" description="Transmembrane protein 87A">
    <location>
        <begin position="27"/>
        <end position="541"/>
    </location>
</feature>
<feature type="topological domain" description="Lumenal" evidence="3">
    <location>
        <begin position="27"/>
        <end position="209"/>
    </location>
</feature>
<feature type="transmembrane region" description="Helical; Name=1" evidence="2">
    <location>
        <begin position="210"/>
        <end position="230"/>
    </location>
</feature>
<feature type="topological domain" description="Cytoplasmic" evidence="3">
    <location>
        <begin position="231"/>
        <end position="241"/>
    </location>
</feature>
<feature type="transmembrane region" description="Helical; Name=2" evidence="2">
    <location>
        <begin position="242"/>
        <end position="262"/>
    </location>
</feature>
<feature type="topological domain" description="Lumenal" evidence="3">
    <location>
        <begin position="263"/>
        <end position="293"/>
    </location>
</feature>
<feature type="transmembrane region" description="Helical; Name=3" evidence="2">
    <location>
        <begin position="294"/>
        <end position="314"/>
    </location>
</feature>
<feature type="topological domain" description="Cytoplasmic" evidence="3">
    <location>
        <begin position="315"/>
        <end position="316"/>
    </location>
</feature>
<feature type="transmembrane region" description="Helical; Name=4" evidence="2">
    <location>
        <begin position="317"/>
        <end position="337"/>
    </location>
</feature>
<feature type="topological domain" description="Lumenal" evidence="3">
    <location>
        <begin position="338"/>
        <end position="344"/>
    </location>
</feature>
<feature type="transmembrane region" description="Helical; Name=5" evidence="2">
    <location>
        <begin position="345"/>
        <end position="365"/>
    </location>
</feature>
<feature type="topological domain" description="Cytoplasmic" evidence="3">
    <location>
        <begin position="366"/>
        <end position="384"/>
    </location>
</feature>
<feature type="transmembrane region" description="Helical; Name=6" evidence="2">
    <location>
        <begin position="385"/>
        <end position="405"/>
    </location>
</feature>
<feature type="topological domain" description="Lumenal" evidence="3">
    <location>
        <begin position="406"/>
        <end position="422"/>
    </location>
</feature>
<feature type="transmembrane region" description="Helical; Name=7" evidence="2">
    <location>
        <begin position="423"/>
        <end position="443"/>
    </location>
</feature>
<feature type="topological domain" description="Cytoplasmic" evidence="3">
    <location>
        <begin position="444"/>
        <end position="541"/>
    </location>
</feature>
<feature type="glycosylation site" description="N-linked (GlcNAc...) asparagine" evidence="2">
    <location>
        <position position="52"/>
    </location>
</feature>
<feature type="glycosylation site" description="N-linked (GlcNAc...) asparagine" evidence="2">
    <location>
        <position position="109"/>
    </location>
</feature>
<feature type="glycosylation site" description="N-linked (GlcNAc...) asparagine" evidence="2">
    <location>
        <position position="148"/>
    </location>
</feature>
<feature type="glycosylation site" description="N-linked (GlcNAc...) asparagine" evidence="2">
    <location>
        <position position="189"/>
    </location>
</feature>
<feature type="disulfide bond" evidence="1">
    <location>
        <begin position="65"/>
        <end position="116"/>
    </location>
</feature>
<feature type="disulfide bond" evidence="1">
    <location>
        <begin position="82"/>
        <end position="416"/>
    </location>
</feature>
<dbReference type="EMBL" id="CR762316">
    <property type="protein sequence ID" value="CAJ82744.1"/>
    <property type="molecule type" value="mRNA"/>
</dbReference>
<dbReference type="RefSeq" id="NP_001016057.1">
    <property type="nucleotide sequence ID" value="NM_001016057.2"/>
</dbReference>
<dbReference type="SMR" id="Q28EW0"/>
<dbReference type="FunCoup" id="Q28EW0">
    <property type="interactions" value="2751"/>
</dbReference>
<dbReference type="GlyCosmos" id="Q28EW0">
    <property type="glycosylation" value="4 sites, No reported glycans"/>
</dbReference>
<dbReference type="PaxDb" id="8364-ENSXETP00000030172"/>
<dbReference type="GeneID" id="548811"/>
<dbReference type="KEGG" id="xtr:548811"/>
<dbReference type="AGR" id="Xenbase:XB-GENE-963260"/>
<dbReference type="CTD" id="84910"/>
<dbReference type="Xenbase" id="XB-GENE-963260">
    <property type="gene designation" value="tmem87b"/>
</dbReference>
<dbReference type="eggNOG" id="KOG2568">
    <property type="taxonomic scope" value="Eukaryota"/>
</dbReference>
<dbReference type="HOGENOM" id="CLU_027525_0_0_1"/>
<dbReference type="InParanoid" id="Q28EW0"/>
<dbReference type="OMA" id="RTENCTP"/>
<dbReference type="OrthoDB" id="19932at2759"/>
<dbReference type="Proteomes" id="UP000008143">
    <property type="component" value="Chromosome 5"/>
</dbReference>
<dbReference type="Bgee" id="ENSXETG00000013776">
    <property type="expression patterns" value="Expressed in egg cell and 15 other cell types or tissues"/>
</dbReference>
<dbReference type="GO" id="GO:0032580">
    <property type="term" value="C:Golgi cisterna membrane"/>
    <property type="evidence" value="ECO:0000250"/>
    <property type="project" value="UniProtKB"/>
</dbReference>
<dbReference type="GO" id="GO:0000139">
    <property type="term" value="C:Golgi membrane"/>
    <property type="evidence" value="ECO:0007669"/>
    <property type="project" value="UniProtKB-SubCell"/>
</dbReference>
<dbReference type="GO" id="GO:0005886">
    <property type="term" value="C:plasma membrane"/>
    <property type="evidence" value="ECO:0000250"/>
    <property type="project" value="UniProtKB"/>
</dbReference>
<dbReference type="GO" id="GO:0071260">
    <property type="term" value="P:cellular response to mechanical stimulus"/>
    <property type="evidence" value="ECO:0000250"/>
    <property type="project" value="UniProtKB"/>
</dbReference>
<dbReference type="GO" id="GO:0050976">
    <property type="term" value="P:detection of mechanical stimulus involved in sensory perception of touch"/>
    <property type="evidence" value="ECO:0000250"/>
    <property type="project" value="UniProtKB"/>
</dbReference>
<dbReference type="InterPro" id="IPR053937">
    <property type="entry name" value="GOST_TM"/>
</dbReference>
<dbReference type="InterPro" id="IPR009637">
    <property type="entry name" value="GPR107/GPR108-like"/>
</dbReference>
<dbReference type="InterPro" id="IPR054101">
    <property type="entry name" value="TMEM87A/B_GOLD"/>
</dbReference>
<dbReference type="PANTHER" id="PTHR21229">
    <property type="entry name" value="LUNG SEVEN TRANSMEMBRANE RECEPTOR"/>
    <property type="match status" value="1"/>
</dbReference>
<dbReference type="PANTHER" id="PTHR21229:SF16">
    <property type="entry name" value="TRANSMEMBRANE PROTEIN 87B"/>
    <property type="match status" value="1"/>
</dbReference>
<dbReference type="Pfam" id="PF06814">
    <property type="entry name" value="GOST_TM"/>
    <property type="match status" value="1"/>
</dbReference>
<dbReference type="Pfam" id="PF21901">
    <property type="entry name" value="TMEM87A-B_GOLD"/>
    <property type="match status" value="1"/>
</dbReference>
<proteinExistence type="evidence at transcript level"/>
<keyword id="KW-1003">Cell membrane</keyword>
<keyword id="KW-1015">Disulfide bond</keyword>
<keyword id="KW-0325">Glycoprotein</keyword>
<keyword id="KW-0333">Golgi apparatus</keyword>
<keyword id="KW-0472">Membrane</keyword>
<keyword id="KW-1185">Reference proteome</keyword>
<keyword id="KW-0732">Signal</keyword>
<keyword id="KW-0812">Transmembrane</keyword>
<keyword id="KW-1133">Transmembrane helix</keyword>
<protein>
    <recommendedName>
        <fullName evidence="3">Transmembrane protein 87A</fullName>
    </recommendedName>
    <alternativeName>
        <fullName evidence="1">Elkin1</fullName>
    </alternativeName>
</protein>
<evidence type="ECO:0000250" key="1">
    <source>
        <dbReference type="UniProtKB" id="Q8NBN3"/>
    </source>
</evidence>
<evidence type="ECO:0000255" key="2"/>
<evidence type="ECO:0000305" key="3"/>
<evidence type="ECO:0000312" key="4">
    <source>
        <dbReference type="EMBL" id="CAJ82744.1"/>
    </source>
</evidence>
<comment type="function">
    <text evidence="1">Potential monoatomic ion channel gated by mechanical force, implicated in normal touch sensitivity through the generation of mechanically activated currents. However, a direct channel activity is debated and an alternative could be that it functions as a chaperone for an unidentified mechanosensitive ion channel. Could also be involved in cell mechanosensitivity regulating cell adhesion and migration. May also be involved in retrograde transport from endosomes to the trans-Golgi network (TGN).</text>
</comment>
<comment type="subcellular location">
    <subcellularLocation>
        <location evidence="1">Cell membrane</location>
        <topology evidence="2">Multi-pass membrane protein</topology>
    </subcellularLocation>
    <subcellularLocation>
        <location evidence="1">Golgi apparatus membrane</location>
        <topology evidence="2">Multi-pass membrane protein</topology>
    </subcellularLocation>
</comment>
<comment type="similarity">
    <text evidence="3">Belongs to the LU7TM family. TMEM87 subfamily.</text>
</comment>
<accession>Q28EW0</accession>
<reference key="1">
    <citation type="submission" date="2006-10" db="EMBL/GenBank/DDBJ databases">
        <authorList>
            <consortium name="Sanger Xenopus tropicalis EST/cDNA project"/>
        </authorList>
    </citation>
    <scope>NUCLEOTIDE SEQUENCE [LARGE SCALE MRNA]</scope>
    <source>
        <tissue>Gastrula</tissue>
    </source>
</reference>